<keyword id="KW-0687">Ribonucleoprotein</keyword>
<keyword id="KW-0689">Ribosomal protein</keyword>
<keyword id="KW-0694">RNA-binding</keyword>
<keyword id="KW-0699">rRNA-binding</keyword>
<keyword id="KW-0820">tRNA-binding</keyword>
<comment type="function">
    <text evidence="1">One of the primary rRNA binding proteins, it binds directly to 16S rRNA where it nucleates assembly of the head domain of the 30S subunit. Is located at the subunit interface close to the decoding center, probably blocks exit of the E-site tRNA.</text>
</comment>
<comment type="subunit">
    <text evidence="1">Part of the 30S ribosomal subunit. Contacts proteins S9 and S11.</text>
</comment>
<comment type="similarity">
    <text evidence="1">Belongs to the universal ribosomal protein uS7 family.</text>
</comment>
<accession>P20819</accession>
<reference key="1">
    <citation type="journal article" date="1990" name="J. Bacteriol.">
        <title>Nucleotide sequence analysis of the Leptospira biflexa serovar patoc rpsL and rpsG genes.</title>
        <authorList>
            <person name="Zuerner R.L."/>
            <person name="Charon N.W."/>
        </authorList>
    </citation>
    <scope>NUCLEOTIDE SEQUENCE [GENOMIC DNA]</scope>
    <source>
        <strain>Patoc I / Serovar Patoc</strain>
    </source>
</reference>
<organism>
    <name type="scientific">Leptospira biflexa</name>
    <dbReference type="NCBI Taxonomy" id="172"/>
    <lineage>
        <taxon>Bacteria</taxon>
        <taxon>Pseudomonadati</taxon>
        <taxon>Spirochaetota</taxon>
        <taxon>Spirochaetia</taxon>
        <taxon>Leptospirales</taxon>
        <taxon>Leptospiraceae</taxon>
        <taxon>Leptospira</taxon>
    </lineage>
</organism>
<evidence type="ECO:0000255" key="1">
    <source>
        <dbReference type="HAMAP-Rule" id="MF_00480"/>
    </source>
</evidence>
<evidence type="ECO:0000305" key="2"/>
<gene>
    <name evidence="1" type="primary">rpsG</name>
</gene>
<proteinExistence type="inferred from homology"/>
<name>RS7_LEPBI</name>
<dbReference type="EMBL" id="M57776">
    <property type="protein sequence ID" value="AAA63277.1"/>
    <property type="molecule type" value="Genomic_DNA"/>
</dbReference>
<dbReference type="PIR" id="B36152">
    <property type="entry name" value="B36152"/>
</dbReference>
<dbReference type="SMR" id="P20819"/>
<dbReference type="GO" id="GO:0015935">
    <property type="term" value="C:small ribosomal subunit"/>
    <property type="evidence" value="ECO:0007669"/>
    <property type="project" value="InterPro"/>
</dbReference>
<dbReference type="GO" id="GO:0019843">
    <property type="term" value="F:rRNA binding"/>
    <property type="evidence" value="ECO:0007669"/>
    <property type="project" value="UniProtKB-UniRule"/>
</dbReference>
<dbReference type="GO" id="GO:0003735">
    <property type="term" value="F:structural constituent of ribosome"/>
    <property type="evidence" value="ECO:0007669"/>
    <property type="project" value="InterPro"/>
</dbReference>
<dbReference type="GO" id="GO:0000049">
    <property type="term" value="F:tRNA binding"/>
    <property type="evidence" value="ECO:0007669"/>
    <property type="project" value="UniProtKB-UniRule"/>
</dbReference>
<dbReference type="GO" id="GO:0006412">
    <property type="term" value="P:translation"/>
    <property type="evidence" value="ECO:0007669"/>
    <property type="project" value="UniProtKB-UniRule"/>
</dbReference>
<dbReference type="CDD" id="cd14869">
    <property type="entry name" value="uS7_Bacteria"/>
    <property type="match status" value="1"/>
</dbReference>
<dbReference type="FunFam" id="1.10.455.10:FF:000001">
    <property type="entry name" value="30S ribosomal protein S7"/>
    <property type="match status" value="1"/>
</dbReference>
<dbReference type="Gene3D" id="1.10.455.10">
    <property type="entry name" value="Ribosomal protein S7 domain"/>
    <property type="match status" value="1"/>
</dbReference>
<dbReference type="HAMAP" id="MF_00480_B">
    <property type="entry name" value="Ribosomal_uS7_B"/>
    <property type="match status" value="1"/>
</dbReference>
<dbReference type="InterPro" id="IPR000235">
    <property type="entry name" value="Ribosomal_uS7"/>
</dbReference>
<dbReference type="InterPro" id="IPR005717">
    <property type="entry name" value="Ribosomal_uS7_bac/org-type"/>
</dbReference>
<dbReference type="InterPro" id="IPR020606">
    <property type="entry name" value="Ribosomal_uS7_CS"/>
</dbReference>
<dbReference type="InterPro" id="IPR023798">
    <property type="entry name" value="Ribosomal_uS7_dom"/>
</dbReference>
<dbReference type="InterPro" id="IPR036823">
    <property type="entry name" value="Ribosomal_uS7_dom_sf"/>
</dbReference>
<dbReference type="NCBIfam" id="TIGR01029">
    <property type="entry name" value="rpsG_bact"/>
    <property type="match status" value="1"/>
</dbReference>
<dbReference type="PANTHER" id="PTHR11205">
    <property type="entry name" value="RIBOSOMAL PROTEIN S7"/>
    <property type="match status" value="1"/>
</dbReference>
<dbReference type="Pfam" id="PF00177">
    <property type="entry name" value="Ribosomal_S7"/>
    <property type="match status" value="1"/>
</dbReference>
<dbReference type="PIRSF" id="PIRSF002122">
    <property type="entry name" value="RPS7p_RPS7a_RPS5e_RPS7o"/>
    <property type="match status" value="1"/>
</dbReference>
<dbReference type="SUPFAM" id="SSF47973">
    <property type="entry name" value="Ribosomal protein S7"/>
    <property type="match status" value="1"/>
</dbReference>
<dbReference type="PROSITE" id="PS00052">
    <property type="entry name" value="RIBOSOMAL_S7"/>
    <property type="match status" value="1"/>
</dbReference>
<protein>
    <recommendedName>
        <fullName evidence="1">Small ribosomal subunit protein uS7</fullName>
    </recommendedName>
    <alternativeName>
        <fullName evidence="2">30S ribosomal protein S7</fullName>
    </alternativeName>
</protein>
<feature type="chain" id="PRO_0000124283" description="Small ribosomal subunit protein uS7">
    <location>
        <begin position="1"/>
        <end position="158"/>
    </location>
</feature>
<sequence length="158" mass="18309">MSRRRGKVEPRHIEGDPKYNDKVISKFINCLMVDGKKSVAEAVFYDALEVIAKKTGQDPYQVFQEALENAKPQVEVKSRRVGGVTLPQFQSKFVRERRLALGIRWLIRYSRDRNEKSMKNKLAAEFMEAQKGTGSAIKKKEDIRKMADANKAFSHYRW</sequence>